<accession>A0QI16</accession>
<comment type="function">
    <text evidence="1">Attaches a formyl group to the free amino group of methionyl-tRNA(fMet). The formyl group appears to play a dual role in the initiator identity of N-formylmethionyl-tRNA by promoting its recognition by IF2 and preventing the misappropriation of this tRNA by the elongation apparatus.</text>
</comment>
<comment type="catalytic activity">
    <reaction evidence="1">
        <text>L-methionyl-tRNA(fMet) + (6R)-10-formyltetrahydrofolate = N-formyl-L-methionyl-tRNA(fMet) + (6S)-5,6,7,8-tetrahydrofolate + H(+)</text>
        <dbReference type="Rhea" id="RHEA:24380"/>
        <dbReference type="Rhea" id="RHEA-COMP:9952"/>
        <dbReference type="Rhea" id="RHEA-COMP:9953"/>
        <dbReference type="ChEBI" id="CHEBI:15378"/>
        <dbReference type="ChEBI" id="CHEBI:57453"/>
        <dbReference type="ChEBI" id="CHEBI:78530"/>
        <dbReference type="ChEBI" id="CHEBI:78844"/>
        <dbReference type="ChEBI" id="CHEBI:195366"/>
        <dbReference type="EC" id="2.1.2.9"/>
    </reaction>
</comment>
<comment type="similarity">
    <text evidence="1">Belongs to the Fmt family.</text>
</comment>
<evidence type="ECO:0000255" key="1">
    <source>
        <dbReference type="HAMAP-Rule" id="MF_00182"/>
    </source>
</evidence>
<proteinExistence type="inferred from homology"/>
<reference key="1">
    <citation type="submission" date="2006-10" db="EMBL/GenBank/DDBJ databases">
        <authorList>
            <person name="Fleischmann R.D."/>
            <person name="Dodson R.J."/>
            <person name="Haft D.H."/>
            <person name="Merkel J.S."/>
            <person name="Nelson W.C."/>
            <person name="Fraser C.M."/>
        </authorList>
    </citation>
    <scope>NUCLEOTIDE SEQUENCE [LARGE SCALE GENOMIC DNA]</scope>
    <source>
        <strain>104</strain>
    </source>
</reference>
<gene>
    <name evidence="1" type="primary">fmt</name>
    <name type="ordered locus">MAV_3372</name>
</gene>
<feature type="chain" id="PRO_1000203867" description="Methionyl-tRNA formyltransferase">
    <location>
        <begin position="1"/>
        <end position="317"/>
    </location>
</feature>
<feature type="binding site" evidence="1">
    <location>
        <begin position="112"/>
        <end position="115"/>
    </location>
    <ligand>
        <name>(6S)-5,6,7,8-tetrahydrofolate</name>
        <dbReference type="ChEBI" id="CHEBI:57453"/>
    </ligand>
</feature>
<name>FMT_MYCA1</name>
<protein>
    <recommendedName>
        <fullName evidence="1">Methionyl-tRNA formyltransferase</fullName>
        <ecNumber evidence="1">2.1.2.9</ecNumber>
    </recommendedName>
</protein>
<dbReference type="EC" id="2.1.2.9" evidence="1"/>
<dbReference type="EMBL" id="CP000479">
    <property type="protein sequence ID" value="ABK67076.1"/>
    <property type="molecule type" value="Genomic_DNA"/>
</dbReference>
<dbReference type="SMR" id="A0QI16"/>
<dbReference type="KEGG" id="mav:MAV_3372"/>
<dbReference type="HOGENOM" id="CLU_033347_1_0_11"/>
<dbReference type="Proteomes" id="UP000001574">
    <property type="component" value="Chromosome"/>
</dbReference>
<dbReference type="GO" id="GO:0005829">
    <property type="term" value="C:cytosol"/>
    <property type="evidence" value="ECO:0007669"/>
    <property type="project" value="TreeGrafter"/>
</dbReference>
<dbReference type="GO" id="GO:0004479">
    <property type="term" value="F:methionyl-tRNA formyltransferase activity"/>
    <property type="evidence" value="ECO:0007669"/>
    <property type="project" value="UniProtKB-UniRule"/>
</dbReference>
<dbReference type="CDD" id="cd08646">
    <property type="entry name" value="FMT_core_Met-tRNA-FMT_N"/>
    <property type="match status" value="1"/>
</dbReference>
<dbReference type="CDD" id="cd08704">
    <property type="entry name" value="Met_tRNA_FMT_C"/>
    <property type="match status" value="1"/>
</dbReference>
<dbReference type="FunFam" id="3.40.50.12230:FF:000001">
    <property type="entry name" value="Methionyl-tRNA formyltransferase"/>
    <property type="match status" value="1"/>
</dbReference>
<dbReference type="Gene3D" id="3.40.50.12230">
    <property type="match status" value="1"/>
</dbReference>
<dbReference type="HAMAP" id="MF_00182">
    <property type="entry name" value="Formyl_trans"/>
    <property type="match status" value="1"/>
</dbReference>
<dbReference type="InterPro" id="IPR005794">
    <property type="entry name" value="Fmt"/>
</dbReference>
<dbReference type="InterPro" id="IPR005793">
    <property type="entry name" value="Formyl_trans_C"/>
</dbReference>
<dbReference type="InterPro" id="IPR002376">
    <property type="entry name" value="Formyl_transf_N"/>
</dbReference>
<dbReference type="InterPro" id="IPR036477">
    <property type="entry name" value="Formyl_transf_N_sf"/>
</dbReference>
<dbReference type="InterPro" id="IPR011034">
    <property type="entry name" value="Formyl_transferase-like_C_sf"/>
</dbReference>
<dbReference type="InterPro" id="IPR044135">
    <property type="entry name" value="Met-tRNA-FMT_C"/>
</dbReference>
<dbReference type="InterPro" id="IPR041711">
    <property type="entry name" value="Met-tRNA-FMT_N"/>
</dbReference>
<dbReference type="NCBIfam" id="TIGR00460">
    <property type="entry name" value="fmt"/>
    <property type="match status" value="1"/>
</dbReference>
<dbReference type="PANTHER" id="PTHR11138">
    <property type="entry name" value="METHIONYL-TRNA FORMYLTRANSFERASE"/>
    <property type="match status" value="1"/>
</dbReference>
<dbReference type="PANTHER" id="PTHR11138:SF5">
    <property type="entry name" value="METHIONYL-TRNA FORMYLTRANSFERASE, MITOCHONDRIAL"/>
    <property type="match status" value="1"/>
</dbReference>
<dbReference type="Pfam" id="PF02911">
    <property type="entry name" value="Formyl_trans_C"/>
    <property type="match status" value="1"/>
</dbReference>
<dbReference type="Pfam" id="PF00551">
    <property type="entry name" value="Formyl_trans_N"/>
    <property type="match status" value="1"/>
</dbReference>
<dbReference type="SUPFAM" id="SSF50486">
    <property type="entry name" value="FMT C-terminal domain-like"/>
    <property type="match status" value="1"/>
</dbReference>
<dbReference type="SUPFAM" id="SSF53328">
    <property type="entry name" value="Formyltransferase"/>
    <property type="match status" value="1"/>
</dbReference>
<sequence>MPVRLVFAGTPEPALPALRRLLDSPRHEVIAVLTRPDAASGRRGKPEPSPVAREALDRGIPVLRPARPNSPEFVAELAQLAPDCCAVVAYGALLRDELLAVPPHGWINLHFSLLPAWRGAAPVQAAIAAGDTITGATTFRIEPALDSGPIYGVVTEAIRPTDTAGELLARLAVSGAELLSATLDGIADSTLTPRPQPAEGVSIAPKITVEQARVRWDLPAPVVERRIRAVTPNPGAWTVIGDLRIKLGPVRLGAASDLPAPPEPLPPGAIHVDRKSVWVGTASDPVRLDQIQPPGKKFMNAVDWARGARLDPAARAT</sequence>
<keyword id="KW-0648">Protein biosynthesis</keyword>
<keyword id="KW-0808">Transferase</keyword>
<organism>
    <name type="scientific">Mycobacterium avium (strain 104)</name>
    <dbReference type="NCBI Taxonomy" id="243243"/>
    <lineage>
        <taxon>Bacteria</taxon>
        <taxon>Bacillati</taxon>
        <taxon>Actinomycetota</taxon>
        <taxon>Actinomycetes</taxon>
        <taxon>Mycobacteriales</taxon>
        <taxon>Mycobacteriaceae</taxon>
        <taxon>Mycobacterium</taxon>
        <taxon>Mycobacterium avium complex (MAC)</taxon>
    </lineage>
</organism>